<sequence length="824" mass="93533">MSAPSEEEEYARLVMEAQPEWLRAEVKRLSHELAETTREKIQAAEYGLAVLEEKHQLKLQFEELEVDYEAIRSEMEQLKEAFGQAHTNHKKVAADGESREESLIQESASKEQYYVRKVLELQTELKQLRNVLTNTQSENERLASVAQELKEINQNVEIQRGRLRDDIKEYKFREARLLQDYSELEEENISLQKQVSVLRQNQVEFEGLKHEIKRLEEETEYLNSQLEDAIRLKEISERQLEEALETLKTEREQKNSLRKELSHYMSINDSFYTSHLHVSLDGLKFSDDAAEPNNDAEALVNGFEHGGLAKLPLDNKTSTPKKEGLAPPSPSLVSDLLSELNISEIQKLKQQLMQMEREKAGLLATLQDTQKQLEHTRGSLSEQQEKVTRLTENLSALRRLQASKERQTALDNEKDRDSHEDGDYYEVDINGPEILACKYHVAVAEAGELREQLKALRSTHEAREAQHAEEKGRYEAEGQALTEKVSLLEKASRQDRELLARLEKELKKVSDVAGETQGSLSVAQDELVTFSEELANLYHHVCMCNNETPNRVMLDYYREGQGGAGRTSPGGRTSPEARGRRSPILLPKGLLAPEAGRADGGTGDSSPSPGSSLPSPLSDPRREPMNIYNLIAIIRDQIKHLQAAVDRTTELSRQRIASQELGPAVDKDKEALMEEILKLKSLLSTKREQITTLRTVLKANKQTAEVALANLKSKYENEKAMVTETMMKLRNELKALKEDAATFSSLRAMFATRCDEYITQLDEMQRQLAAAEDEKKTLNSLLRMAIQQKLALTQRLELLELDHEQTRRGRAKAAPKTKPATPSL</sequence>
<evidence type="ECO:0000250" key="1">
    <source>
        <dbReference type="UniProtKB" id="Q921C5"/>
    </source>
</evidence>
<evidence type="ECO:0000255" key="2"/>
<evidence type="ECO:0000256" key="3">
    <source>
        <dbReference type="SAM" id="MobiDB-lite"/>
    </source>
</evidence>
<evidence type="ECO:0000269" key="4">
    <source>
    </source>
</evidence>
<evidence type="ECO:0000269" key="5">
    <source>
    </source>
</evidence>
<evidence type="ECO:0000269" key="6">
    <source>
    </source>
</evidence>
<evidence type="ECO:0000269" key="7">
    <source>
    </source>
</evidence>
<evidence type="ECO:0000269" key="8">
    <source>
    </source>
</evidence>
<evidence type="ECO:0000269" key="9">
    <source>
    </source>
</evidence>
<evidence type="ECO:0000269" key="10">
    <source>
    </source>
</evidence>
<evidence type="ECO:0000269" key="11">
    <source>
    </source>
</evidence>
<evidence type="ECO:0000269" key="12">
    <source>
    </source>
</evidence>
<evidence type="ECO:0000269" key="13">
    <source>
    </source>
</evidence>
<evidence type="ECO:0000269" key="14">
    <source>
    </source>
</evidence>
<evidence type="ECO:0000269" key="15">
    <source>
    </source>
</evidence>
<evidence type="ECO:0000303" key="16">
    <source>
    </source>
</evidence>
<evidence type="ECO:0000305" key="17"/>
<evidence type="ECO:0000312" key="18">
    <source>
        <dbReference type="HGNC" id="HGNC:17208"/>
    </source>
</evidence>
<evidence type="ECO:0007744" key="19">
    <source>
    </source>
</evidence>
<evidence type="ECO:0007744" key="20">
    <source>
    </source>
</evidence>
<evidence type="ECO:0007744" key="21">
    <source>
    </source>
</evidence>
<evidence type="ECO:0007744" key="22">
    <source>
    </source>
</evidence>
<evidence type="ECO:0007744" key="23">
    <source>
    </source>
</evidence>
<evidence type="ECO:0007744" key="24">
    <source>
    </source>
</evidence>
<evidence type="ECO:0007744" key="25">
    <source>
    </source>
</evidence>
<evidence type="ECO:0007744" key="26">
    <source>
    </source>
</evidence>
<evidence type="ECO:0007744" key="27">
    <source>
    </source>
</evidence>
<evidence type="ECO:0007744" key="28">
    <source>
    </source>
</evidence>
<evidence type="ECO:0007829" key="29">
    <source>
        <dbReference type="PDB" id="6OFP"/>
    </source>
</evidence>
<evidence type="ECO:0007829" key="30">
    <source>
        <dbReference type="PDB" id="6PSE"/>
    </source>
</evidence>
<dbReference type="EMBL" id="AY052562">
    <property type="protein sequence ID" value="AAL12246.1"/>
    <property type="molecule type" value="mRNA"/>
</dbReference>
<dbReference type="EMBL" id="AB014599">
    <property type="protein sequence ID" value="BAA31674.1"/>
    <property type="status" value="ALT_INIT"/>
    <property type="molecule type" value="mRNA"/>
</dbReference>
<dbReference type="EMBL" id="AL137074">
    <property type="status" value="NOT_ANNOTATED_CDS"/>
    <property type="molecule type" value="Genomic_DNA"/>
</dbReference>
<dbReference type="EMBL" id="AL136981">
    <property type="status" value="NOT_ANNOTATED_CDS"/>
    <property type="molecule type" value="Genomic_DNA"/>
</dbReference>
<dbReference type="EMBL" id="BC004296">
    <property type="protein sequence ID" value="AAH04296.1"/>
    <property type="molecule type" value="mRNA"/>
</dbReference>
<dbReference type="EMBL" id="BC073970">
    <property type="protein sequence ID" value="AAH73970.1"/>
    <property type="molecule type" value="mRNA"/>
</dbReference>
<dbReference type="CCDS" id="CCDS35064.1">
    <molecule id="Q8TD16-2"/>
</dbReference>
<dbReference type="CCDS" id="CCDS6700.1">
    <molecule id="Q8TD16-1"/>
</dbReference>
<dbReference type="RefSeq" id="NP_001003800.1">
    <molecule id="Q8TD16-2"/>
    <property type="nucleotide sequence ID" value="NM_001003800.2"/>
</dbReference>
<dbReference type="RefSeq" id="NP_056065.1">
    <molecule id="Q8TD16-1"/>
    <property type="nucleotide sequence ID" value="NM_015250.4"/>
</dbReference>
<dbReference type="PDB" id="6OFP">
    <property type="method" value="X-ray"/>
    <property type="resolution" value="2.01 A"/>
    <property type="chains" value="A/B=715-804"/>
</dbReference>
<dbReference type="PDB" id="6PSE">
    <property type="method" value="X-ray"/>
    <property type="resolution" value="2.40 A"/>
    <property type="chains" value="A/B=1-98"/>
</dbReference>
<dbReference type="PDBsum" id="6OFP"/>
<dbReference type="PDBsum" id="6PSE"/>
<dbReference type="SMR" id="Q8TD16"/>
<dbReference type="BioGRID" id="116891">
    <property type="interactions" value="431"/>
</dbReference>
<dbReference type="CORUM" id="Q8TD16"/>
<dbReference type="DIP" id="DIP-53426N"/>
<dbReference type="FunCoup" id="Q8TD16">
    <property type="interactions" value="3829"/>
</dbReference>
<dbReference type="IntAct" id="Q8TD16">
    <property type="interactions" value="122"/>
</dbReference>
<dbReference type="STRING" id="9606.ENSP00000349351"/>
<dbReference type="GlyGen" id="Q8TD16">
    <property type="glycosylation" value="1 site, 1 O-linked glycan (1 site)"/>
</dbReference>
<dbReference type="iPTMnet" id="Q8TD16"/>
<dbReference type="PhosphoSitePlus" id="Q8TD16"/>
<dbReference type="BioMuta" id="BICD2"/>
<dbReference type="DMDM" id="34098604"/>
<dbReference type="jPOST" id="Q8TD16"/>
<dbReference type="MassIVE" id="Q8TD16"/>
<dbReference type="PaxDb" id="9606-ENSP00000349351"/>
<dbReference type="PeptideAtlas" id="Q8TD16"/>
<dbReference type="ProteomicsDB" id="74215">
    <molecule id="Q8TD16-1"/>
</dbReference>
<dbReference type="ProteomicsDB" id="74216">
    <molecule id="Q8TD16-2"/>
</dbReference>
<dbReference type="Pumba" id="Q8TD16"/>
<dbReference type="Antibodypedia" id="13783">
    <property type="antibodies" value="205 antibodies from 27 providers"/>
</dbReference>
<dbReference type="DNASU" id="23299"/>
<dbReference type="Ensembl" id="ENST00000356884.11">
    <molecule id="Q8TD16-2"/>
    <property type="protein sequence ID" value="ENSP00000349351.6"/>
    <property type="gene ID" value="ENSG00000185963.14"/>
</dbReference>
<dbReference type="Ensembl" id="ENST00000375512.3">
    <molecule id="Q8TD16-1"/>
    <property type="protein sequence ID" value="ENSP00000364662.3"/>
    <property type="gene ID" value="ENSG00000185963.14"/>
</dbReference>
<dbReference type="GeneID" id="23299"/>
<dbReference type="KEGG" id="hsa:23299"/>
<dbReference type="MANE-Select" id="ENST00000356884.11">
    <molecule id="Q8TD16-2"/>
    <property type="protein sequence ID" value="ENSP00000349351.6"/>
    <property type="RefSeq nucleotide sequence ID" value="NM_001003800.2"/>
    <property type="RefSeq protein sequence ID" value="NP_001003800.1"/>
</dbReference>
<dbReference type="UCSC" id="uc004aso.2">
    <molecule id="Q8TD16-1"/>
    <property type="organism name" value="human"/>
</dbReference>
<dbReference type="AGR" id="HGNC:17208"/>
<dbReference type="CTD" id="23299"/>
<dbReference type="DisGeNET" id="23299"/>
<dbReference type="GeneCards" id="BICD2"/>
<dbReference type="HGNC" id="HGNC:17208">
    <property type="gene designation" value="BICD2"/>
</dbReference>
<dbReference type="HPA" id="ENSG00000185963">
    <property type="expression patterns" value="Tissue enhanced (skin)"/>
</dbReference>
<dbReference type="MalaCards" id="BICD2"/>
<dbReference type="MIM" id="609797">
    <property type="type" value="gene"/>
</dbReference>
<dbReference type="MIM" id="615290">
    <property type="type" value="phenotype"/>
</dbReference>
<dbReference type="MIM" id="618291">
    <property type="type" value="phenotype"/>
</dbReference>
<dbReference type="neXtProt" id="NX_Q8TD16"/>
<dbReference type="OpenTargets" id="ENSG00000185963"/>
<dbReference type="Orphanet" id="363454">
    <property type="disease" value="BICD2-related autosomal dominant childhood-onset proximal spinal muscular atrophy"/>
</dbReference>
<dbReference type="PharmGKB" id="PA134969018"/>
<dbReference type="VEuPathDB" id="HostDB:ENSG00000185963"/>
<dbReference type="eggNOG" id="KOG0999">
    <property type="taxonomic scope" value="Eukaryota"/>
</dbReference>
<dbReference type="GeneTree" id="ENSGT00940000154471"/>
<dbReference type="HOGENOM" id="CLU_014107_1_0_1"/>
<dbReference type="InParanoid" id="Q8TD16"/>
<dbReference type="OMA" id="CACASER"/>
<dbReference type="OrthoDB" id="10069295at2759"/>
<dbReference type="PAN-GO" id="Q8TD16">
    <property type="GO annotations" value="10 GO annotations based on evolutionary models"/>
</dbReference>
<dbReference type="PhylomeDB" id="Q8TD16"/>
<dbReference type="TreeFam" id="TF323833"/>
<dbReference type="PathwayCommons" id="Q8TD16"/>
<dbReference type="Reactome" id="R-HSA-6811436">
    <property type="pathway name" value="COPI-independent Golgi-to-ER retrograde traffic"/>
</dbReference>
<dbReference type="SignaLink" id="Q8TD16"/>
<dbReference type="SIGNOR" id="Q8TD16"/>
<dbReference type="BioGRID-ORCS" id="23299">
    <property type="hits" value="21 hits in 1157 CRISPR screens"/>
</dbReference>
<dbReference type="CD-CODE" id="D6A53B8E">
    <property type="entry name" value="Nuclear pore complex"/>
</dbReference>
<dbReference type="ChiTaRS" id="BICD2">
    <property type="organism name" value="human"/>
</dbReference>
<dbReference type="GeneWiki" id="BICD2"/>
<dbReference type="GenomeRNAi" id="23299"/>
<dbReference type="Pharos" id="Q8TD16">
    <property type="development level" value="Tbio"/>
</dbReference>
<dbReference type="PRO" id="PR:Q8TD16"/>
<dbReference type="Proteomes" id="UP000005640">
    <property type="component" value="Chromosome 9"/>
</dbReference>
<dbReference type="RNAct" id="Q8TD16">
    <property type="molecule type" value="protein"/>
</dbReference>
<dbReference type="Bgee" id="ENSG00000185963">
    <property type="expression patterns" value="Expressed in gingival epithelium and 208 other cell types or tissues"/>
</dbReference>
<dbReference type="GO" id="GO:0005642">
    <property type="term" value="C:annulate lamellae"/>
    <property type="evidence" value="ECO:0000314"/>
    <property type="project" value="UniProtKB"/>
</dbReference>
<dbReference type="GO" id="GO:0005813">
    <property type="term" value="C:centrosome"/>
    <property type="evidence" value="ECO:0000315"/>
    <property type="project" value="ARUK-UCL"/>
</dbReference>
<dbReference type="GO" id="GO:0005737">
    <property type="term" value="C:cytoplasm"/>
    <property type="evidence" value="ECO:0000315"/>
    <property type="project" value="ARUK-UCL"/>
</dbReference>
<dbReference type="GO" id="GO:0031410">
    <property type="term" value="C:cytoplasmic vesicle"/>
    <property type="evidence" value="ECO:0000250"/>
    <property type="project" value="BHF-UCL"/>
</dbReference>
<dbReference type="GO" id="GO:0005829">
    <property type="term" value="C:cytosol"/>
    <property type="evidence" value="ECO:0000314"/>
    <property type="project" value="HPA"/>
</dbReference>
<dbReference type="GO" id="GO:0005794">
    <property type="term" value="C:Golgi apparatus"/>
    <property type="evidence" value="ECO:0000314"/>
    <property type="project" value="HPA"/>
</dbReference>
<dbReference type="GO" id="GO:0005635">
    <property type="term" value="C:nuclear envelope"/>
    <property type="evidence" value="ECO:0000314"/>
    <property type="project" value="UniProtKB"/>
</dbReference>
<dbReference type="GO" id="GO:0005643">
    <property type="term" value="C:nuclear pore"/>
    <property type="evidence" value="ECO:0000314"/>
    <property type="project" value="UniProtKB"/>
</dbReference>
<dbReference type="GO" id="GO:0005886">
    <property type="term" value="C:plasma membrane"/>
    <property type="evidence" value="ECO:0000314"/>
    <property type="project" value="HPA"/>
</dbReference>
<dbReference type="GO" id="GO:0008093">
    <property type="term" value="F:cytoskeletal anchor activity"/>
    <property type="evidence" value="ECO:0007669"/>
    <property type="project" value="InterPro"/>
</dbReference>
<dbReference type="GO" id="GO:0034452">
    <property type="term" value="F:dynactin binding"/>
    <property type="evidence" value="ECO:0000250"/>
    <property type="project" value="UniProtKB"/>
</dbReference>
<dbReference type="GO" id="GO:0070840">
    <property type="term" value="F:dynein complex binding"/>
    <property type="evidence" value="ECO:0000250"/>
    <property type="project" value="UniProtKB"/>
</dbReference>
<dbReference type="GO" id="GO:0051959">
    <property type="term" value="F:dynein light intermediate chain binding"/>
    <property type="evidence" value="ECO:0000318"/>
    <property type="project" value="GO_Central"/>
</dbReference>
<dbReference type="GO" id="GO:0031267">
    <property type="term" value="F:small GTPase binding"/>
    <property type="evidence" value="ECO:0000250"/>
    <property type="project" value="BHF-UCL"/>
</dbReference>
<dbReference type="GO" id="GO:0051642">
    <property type="term" value="P:centrosome localization"/>
    <property type="evidence" value="ECO:0000315"/>
    <property type="project" value="UniProtKB"/>
</dbReference>
<dbReference type="GO" id="GO:0072393">
    <property type="term" value="P:microtubule anchoring at microtubule organizing center"/>
    <property type="evidence" value="ECO:0000250"/>
    <property type="project" value="BHF-UCL"/>
</dbReference>
<dbReference type="GO" id="GO:0007018">
    <property type="term" value="P:microtubule-based movement"/>
    <property type="evidence" value="ECO:0000318"/>
    <property type="project" value="GO_Central"/>
</dbReference>
<dbReference type="GO" id="GO:0072385">
    <property type="term" value="P:minus-end-directed organelle transport along microtubule"/>
    <property type="evidence" value="ECO:0000250"/>
    <property type="project" value="BHF-UCL"/>
</dbReference>
<dbReference type="GO" id="GO:0051028">
    <property type="term" value="P:mRNA transport"/>
    <property type="evidence" value="ECO:0007669"/>
    <property type="project" value="UniProtKB-KW"/>
</dbReference>
<dbReference type="GO" id="GO:0034067">
    <property type="term" value="P:protein localization to Golgi apparatus"/>
    <property type="evidence" value="ECO:0000315"/>
    <property type="project" value="UniProtKB"/>
</dbReference>
<dbReference type="GO" id="GO:0015031">
    <property type="term" value="P:protein transport"/>
    <property type="evidence" value="ECO:0007669"/>
    <property type="project" value="UniProtKB-KW"/>
</dbReference>
<dbReference type="GO" id="GO:0070507">
    <property type="term" value="P:regulation of microtubule cytoskeleton organization"/>
    <property type="evidence" value="ECO:0000316"/>
    <property type="project" value="ARUK-UCL"/>
</dbReference>
<dbReference type="GO" id="GO:0006890">
    <property type="term" value="P:retrograde vesicle-mediated transport, Golgi to endoplasmic reticulum"/>
    <property type="evidence" value="ECO:0000315"/>
    <property type="project" value="UniProtKB"/>
</dbReference>
<dbReference type="Gene3D" id="6.10.250.2470">
    <property type="match status" value="1"/>
</dbReference>
<dbReference type="InterPro" id="IPR018477">
    <property type="entry name" value="BICD"/>
</dbReference>
<dbReference type="PANTHER" id="PTHR31233">
    <property type="entry name" value="BICAUDAL D FAMILY MEMBER"/>
    <property type="match status" value="1"/>
</dbReference>
<dbReference type="PANTHER" id="PTHR31233:SF7">
    <property type="entry name" value="PROTEIN BICAUDAL D HOMOLOG 2"/>
    <property type="match status" value="1"/>
</dbReference>
<dbReference type="Pfam" id="PF09730">
    <property type="entry name" value="BicD"/>
    <property type="match status" value="1"/>
</dbReference>
<proteinExistence type="evidence at protein level"/>
<gene>
    <name evidence="18" type="primary">BICD2</name>
    <name type="synonym">KIAA0699</name>
</gene>
<accession>Q8TD16</accession>
<accession>O75181</accession>
<accession>Q5TBQ2</accession>
<accession>Q5TBQ3</accession>
<accession>Q96LH2</accession>
<accession>Q9BT84</accession>
<accession>Q9H561</accession>
<reference key="1">
    <citation type="journal article" date="2002" name="J. Biol. Chem.">
        <title>Purification, cloning, and characterization of Nek8, a novel NIMA-related kinase, and its candidate substrate Bicd2.</title>
        <authorList>
            <person name="Holland P.M."/>
            <person name="Milne A."/>
            <person name="Garka K."/>
            <person name="Johnson R.S."/>
            <person name="Willis C."/>
            <person name="Sims J.E."/>
            <person name="Rauch C.T."/>
            <person name="Bird T.A."/>
            <person name="Virca G.D."/>
        </authorList>
    </citation>
    <scope>NUCLEOTIDE SEQUENCE [MRNA] (ISOFORM 1)</scope>
    <scope>INTERACTION WITH NEK9</scope>
    <scope>PHOSPHORYLATION BY NEK9</scope>
    <scope>SUBCELLULAR LOCATION</scope>
</reference>
<reference key="2">
    <citation type="journal article" date="1998" name="DNA Res.">
        <title>Prediction of the coding sequences of unidentified human genes. X. The complete sequences of 100 new cDNA clones from brain which can code for large proteins in vitro.</title>
        <authorList>
            <person name="Ishikawa K."/>
            <person name="Nagase T."/>
            <person name="Suyama M."/>
            <person name="Miyajima N."/>
            <person name="Tanaka A."/>
            <person name="Kotani H."/>
            <person name="Nomura N."/>
            <person name="Ohara O."/>
        </authorList>
    </citation>
    <scope>NUCLEOTIDE SEQUENCE [LARGE SCALE MRNA] (ISOFORM 2)</scope>
    <source>
        <tissue>Brain</tissue>
    </source>
</reference>
<reference key="3">
    <citation type="journal article" date="2004" name="Nature">
        <title>DNA sequence and analysis of human chromosome 9.</title>
        <authorList>
            <person name="Humphray S.J."/>
            <person name="Oliver K."/>
            <person name="Hunt A.R."/>
            <person name="Plumb R.W."/>
            <person name="Loveland J.E."/>
            <person name="Howe K.L."/>
            <person name="Andrews T.D."/>
            <person name="Searle S."/>
            <person name="Hunt S.E."/>
            <person name="Scott C.E."/>
            <person name="Jones M.C."/>
            <person name="Ainscough R."/>
            <person name="Almeida J.P."/>
            <person name="Ambrose K.D."/>
            <person name="Ashwell R.I.S."/>
            <person name="Babbage A.K."/>
            <person name="Babbage S."/>
            <person name="Bagguley C.L."/>
            <person name="Bailey J."/>
            <person name="Banerjee R."/>
            <person name="Barker D.J."/>
            <person name="Barlow K.F."/>
            <person name="Bates K."/>
            <person name="Beasley H."/>
            <person name="Beasley O."/>
            <person name="Bird C.P."/>
            <person name="Bray-Allen S."/>
            <person name="Brown A.J."/>
            <person name="Brown J.Y."/>
            <person name="Burford D."/>
            <person name="Burrill W."/>
            <person name="Burton J."/>
            <person name="Carder C."/>
            <person name="Carter N.P."/>
            <person name="Chapman J.C."/>
            <person name="Chen Y."/>
            <person name="Clarke G."/>
            <person name="Clark S.Y."/>
            <person name="Clee C.M."/>
            <person name="Clegg S."/>
            <person name="Collier R.E."/>
            <person name="Corby N."/>
            <person name="Crosier M."/>
            <person name="Cummings A.T."/>
            <person name="Davies J."/>
            <person name="Dhami P."/>
            <person name="Dunn M."/>
            <person name="Dutta I."/>
            <person name="Dyer L.W."/>
            <person name="Earthrowl M.E."/>
            <person name="Faulkner L."/>
            <person name="Fleming C.J."/>
            <person name="Frankish A."/>
            <person name="Frankland J.A."/>
            <person name="French L."/>
            <person name="Fricker D.G."/>
            <person name="Garner P."/>
            <person name="Garnett J."/>
            <person name="Ghori J."/>
            <person name="Gilbert J.G.R."/>
            <person name="Glison C."/>
            <person name="Grafham D.V."/>
            <person name="Gribble S."/>
            <person name="Griffiths C."/>
            <person name="Griffiths-Jones S."/>
            <person name="Grocock R."/>
            <person name="Guy J."/>
            <person name="Hall R.E."/>
            <person name="Hammond S."/>
            <person name="Harley J.L."/>
            <person name="Harrison E.S.I."/>
            <person name="Hart E.A."/>
            <person name="Heath P.D."/>
            <person name="Henderson C.D."/>
            <person name="Hopkins B.L."/>
            <person name="Howard P.J."/>
            <person name="Howden P.J."/>
            <person name="Huckle E."/>
            <person name="Johnson C."/>
            <person name="Johnson D."/>
            <person name="Joy A.A."/>
            <person name="Kay M."/>
            <person name="Keenan S."/>
            <person name="Kershaw J.K."/>
            <person name="Kimberley A.M."/>
            <person name="King A."/>
            <person name="Knights A."/>
            <person name="Laird G.K."/>
            <person name="Langford C."/>
            <person name="Lawlor S."/>
            <person name="Leongamornlert D.A."/>
            <person name="Leversha M."/>
            <person name="Lloyd C."/>
            <person name="Lloyd D.M."/>
            <person name="Lovell J."/>
            <person name="Martin S."/>
            <person name="Mashreghi-Mohammadi M."/>
            <person name="Matthews L."/>
            <person name="McLaren S."/>
            <person name="McLay K.E."/>
            <person name="McMurray A."/>
            <person name="Milne S."/>
            <person name="Nickerson T."/>
            <person name="Nisbett J."/>
            <person name="Nordsiek G."/>
            <person name="Pearce A.V."/>
            <person name="Peck A.I."/>
            <person name="Porter K.M."/>
            <person name="Pandian R."/>
            <person name="Pelan S."/>
            <person name="Phillimore B."/>
            <person name="Povey S."/>
            <person name="Ramsey Y."/>
            <person name="Rand V."/>
            <person name="Scharfe M."/>
            <person name="Sehra H.K."/>
            <person name="Shownkeen R."/>
            <person name="Sims S.K."/>
            <person name="Skuce C.D."/>
            <person name="Smith M."/>
            <person name="Steward C.A."/>
            <person name="Swarbreck D."/>
            <person name="Sycamore N."/>
            <person name="Tester J."/>
            <person name="Thorpe A."/>
            <person name="Tracey A."/>
            <person name="Tromans A."/>
            <person name="Thomas D.W."/>
            <person name="Wall M."/>
            <person name="Wallis J.M."/>
            <person name="West A.P."/>
            <person name="Whitehead S.L."/>
            <person name="Willey D.L."/>
            <person name="Williams S.A."/>
            <person name="Wilming L."/>
            <person name="Wray P.W."/>
            <person name="Young L."/>
            <person name="Ashurst J.L."/>
            <person name="Coulson A."/>
            <person name="Blocker H."/>
            <person name="Durbin R.M."/>
            <person name="Sulston J.E."/>
            <person name="Hubbard T."/>
            <person name="Jackson M.J."/>
            <person name="Bentley D.R."/>
            <person name="Beck S."/>
            <person name="Rogers J."/>
            <person name="Dunham I."/>
        </authorList>
    </citation>
    <scope>NUCLEOTIDE SEQUENCE [LARGE SCALE GENOMIC DNA]</scope>
</reference>
<reference key="4">
    <citation type="journal article" date="2004" name="Genome Res.">
        <title>The status, quality, and expansion of the NIH full-length cDNA project: the Mammalian Gene Collection (MGC).</title>
        <authorList>
            <consortium name="The MGC Project Team"/>
        </authorList>
    </citation>
    <scope>NUCLEOTIDE SEQUENCE [LARGE SCALE MRNA] OF 239-824 (ISOFORM 1)</scope>
    <source>
        <tissue>Pancreas</tissue>
        <tissue>Skin</tissue>
    </source>
</reference>
<reference key="5">
    <citation type="journal article" date="2004" name="Anal. Chem.">
        <title>Robust phosphoproteomic profiling of tyrosine phosphorylation sites from human T cells using immobilized metal affinity chromatography and tandem mass spectrometry.</title>
        <authorList>
            <person name="Brill L.M."/>
            <person name="Salomon A.R."/>
            <person name="Ficarro S.B."/>
            <person name="Mukherji M."/>
            <person name="Stettler-Gill M."/>
            <person name="Peters E.C."/>
        </authorList>
    </citation>
    <scope>PHOSPHORYLATION [LARGE SCALE ANALYSIS] AT SER-582</scope>
    <scope>IDENTIFICATION BY MASS SPECTROMETRY [LARGE SCALE ANALYSIS]</scope>
    <source>
        <tissue>Leukemic T-cell</tissue>
    </source>
</reference>
<reference key="6">
    <citation type="journal article" date="2006" name="Cell">
        <title>Global, in vivo, and site-specific phosphorylation dynamics in signaling networks.</title>
        <authorList>
            <person name="Olsen J.V."/>
            <person name="Blagoev B."/>
            <person name="Gnad F."/>
            <person name="Macek B."/>
            <person name="Kumar C."/>
            <person name="Mortensen P."/>
            <person name="Mann M."/>
        </authorList>
    </citation>
    <scope>PHOSPHORYLATION [LARGE SCALE ANALYSIS] AT SER-582</scope>
    <scope>IDENTIFICATION BY MASS SPECTROMETRY [LARGE SCALE ANALYSIS]</scope>
    <source>
        <tissue>Cervix carcinoma</tissue>
    </source>
</reference>
<reference key="7">
    <citation type="journal article" date="2008" name="Mol. Cell">
        <title>Kinase-selective enrichment enables quantitative phosphoproteomics of the kinome across the cell cycle.</title>
        <authorList>
            <person name="Daub H."/>
            <person name="Olsen J.V."/>
            <person name="Bairlein M."/>
            <person name="Gnad F."/>
            <person name="Oppermann F.S."/>
            <person name="Korner R."/>
            <person name="Greff Z."/>
            <person name="Keri G."/>
            <person name="Stemmann O."/>
            <person name="Mann M."/>
        </authorList>
    </citation>
    <scope>PHOSPHORYLATION [LARGE SCALE ANALYSIS] AT SER-190; SER-224; SER-343; SER-395 AND SER-582</scope>
    <scope>IDENTIFICATION BY MASS SPECTROMETRY [LARGE SCALE ANALYSIS]</scope>
    <source>
        <tissue>Cervix carcinoma</tissue>
    </source>
</reference>
<reference key="8">
    <citation type="journal article" date="2008" name="Proc. Natl. Acad. Sci. U.S.A.">
        <title>A quantitative atlas of mitotic phosphorylation.</title>
        <authorList>
            <person name="Dephoure N."/>
            <person name="Zhou C."/>
            <person name="Villen J."/>
            <person name="Beausoleil S.A."/>
            <person name="Bakalarski C.E."/>
            <person name="Elledge S.J."/>
            <person name="Gygi S.P."/>
        </authorList>
    </citation>
    <scope>PHOSPHORYLATION [LARGE SCALE ANALYSIS] AT SER-190; THR-821 AND SER-823</scope>
    <scope>IDENTIFICATION BY MASS SPECTROMETRY [LARGE SCALE ANALYSIS]</scope>
    <source>
        <tissue>Cervix carcinoma</tissue>
    </source>
</reference>
<reference key="9">
    <citation type="journal article" date="2009" name="Anal. Chem.">
        <title>Lys-N and trypsin cover complementary parts of the phosphoproteome in a refined SCX-based approach.</title>
        <authorList>
            <person name="Gauci S."/>
            <person name="Helbig A.O."/>
            <person name="Slijper M."/>
            <person name="Krijgsveld J."/>
            <person name="Heck A.J."/>
            <person name="Mohammed S."/>
        </authorList>
    </citation>
    <scope>ACETYLATION [LARGE SCALE ANALYSIS] AT SER-2</scope>
    <scope>CLEAVAGE OF INITIATOR METHIONINE [LARGE SCALE ANALYSIS]</scope>
    <scope>IDENTIFICATION BY MASS SPECTROMETRY [LARGE SCALE ANALYSIS]</scope>
</reference>
<reference key="10">
    <citation type="journal article" date="2009" name="Sci. Signal.">
        <title>Quantitative phosphoproteomic analysis of T cell receptor signaling reveals system-wide modulation of protein-protein interactions.</title>
        <authorList>
            <person name="Mayya V."/>
            <person name="Lundgren D.H."/>
            <person name="Hwang S.-I."/>
            <person name="Rezaul K."/>
            <person name="Wu L."/>
            <person name="Eng J.K."/>
            <person name="Rodionov V."/>
            <person name="Han D.K."/>
        </authorList>
    </citation>
    <scope>IDENTIFICATION BY MASS SPECTROMETRY [LARGE SCALE ANALYSIS]</scope>
    <source>
        <tissue>Leukemic T-cell</tissue>
    </source>
</reference>
<reference key="11">
    <citation type="journal article" date="2010" name="PLoS Biol.">
        <title>Bicaudal D2, dynein, and kinesin-1 associate with nuclear pore complexes and regulate centrosome and nuclear positioning during mitotic entry.</title>
        <authorList>
            <person name="Splinter D."/>
            <person name="Tanenbaum M.E."/>
            <person name="Lindqvist A."/>
            <person name="Jaarsma D."/>
            <person name="Flotho A."/>
            <person name="Yu K.L."/>
            <person name="Grigoriev I."/>
            <person name="Engelsma D."/>
            <person name="Haasdijk E.D."/>
            <person name="Keijzer N."/>
            <person name="Demmers J."/>
            <person name="Fornerod M."/>
            <person name="Melchior F."/>
            <person name="Hoogenraad C.C."/>
            <person name="Medema R.H."/>
            <person name="Akhmanova A."/>
        </authorList>
    </citation>
    <scope>INTERACTION WITH RANBP2</scope>
    <scope>SUBCELLULAR LOCATION</scope>
</reference>
<reference key="12">
    <citation type="journal article" date="2010" name="Sci. Signal.">
        <title>Quantitative phosphoproteomics reveals widespread full phosphorylation site occupancy during mitosis.</title>
        <authorList>
            <person name="Olsen J.V."/>
            <person name="Vermeulen M."/>
            <person name="Santamaria A."/>
            <person name="Kumar C."/>
            <person name="Miller M.L."/>
            <person name="Jensen L.J."/>
            <person name="Gnad F."/>
            <person name="Cox J."/>
            <person name="Jensen T.S."/>
            <person name="Nigg E.A."/>
            <person name="Brunak S."/>
            <person name="Mann M."/>
        </authorList>
    </citation>
    <scope>PHOSPHORYLATION [LARGE SCALE ANALYSIS] AT SER-582</scope>
    <scope>IDENTIFICATION BY MASS SPECTROMETRY [LARGE SCALE ANALYSIS]</scope>
    <source>
        <tissue>Cervix carcinoma</tissue>
    </source>
</reference>
<reference key="13">
    <citation type="journal article" date="2011" name="BMC Syst. Biol.">
        <title>Initial characterization of the human central proteome.</title>
        <authorList>
            <person name="Burkard T.R."/>
            <person name="Planyavsky M."/>
            <person name="Kaupe I."/>
            <person name="Breitwieser F.P."/>
            <person name="Buerckstuemmer T."/>
            <person name="Bennett K.L."/>
            <person name="Superti-Furga G."/>
            <person name="Colinge J."/>
        </authorList>
    </citation>
    <scope>IDENTIFICATION BY MASS SPECTROMETRY [LARGE SCALE ANALYSIS]</scope>
</reference>
<reference key="14">
    <citation type="journal article" date="2011" name="Sci. Signal.">
        <title>System-wide temporal characterization of the proteome and phosphoproteome of human embryonic stem cell differentiation.</title>
        <authorList>
            <person name="Rigbolt K.T."/>
            <person name="Prokhorova T.A."/>
            <person name="Akimov V."/>
            <person name="Henningsen J."/>
            <person name="Johansen P.T."/>
            <person name="Kratchmarova I."/>
            <person name="Kassem M."/>
            <person name="Mann M."/>
            <person name="Olsen J.V."/>
            <person name="Blagoev B."/>
        </authorList>
    </citation>
    <scope>PHOSPHORYLATION [LARGE SCALE ANALYSIS] AT SER-582</scope>
    <scope>IDENTIFICATION BY MASS SPECTROMETRY [LARGE SCALE ANALYSIS]</scope>
</reference>
<reference key="15">
    <citation type="journal article" date="2012" name="Proc. Natl. Acad. Sci. U.S.A.">
        <title>N-terminal acetylome analyses and functional insights of the N-terminal acetyltransferase NatB.</title>
        <authorList>
            <person name="Van Damme P."/>
            <person name="Lasa M."/>
            <person name="Polevoda B."/>
            <person name="Gazquez C."/>
            <person name="Elosegui-Artola A."/>
            <person name="Kim D.S."/>
            <person name="De Juan-Pardo E."/>
            <person name="Demeyer K."/>
            <person name="Hole K."/>
            <person name="Larrea E."/>
            <person name="Timmerman E."/>
            <person name="Prieto J."/>
            <person name="Arnesen T."/>
            <person name="Sherman F."/>
            <person name="Gevaert K."/>
            <person name="Aldabe R."/>
        </authorList>
    </citation>
    <scope>ACETYLATION [LARGE SCALE ANALYSIS] AT SER-2</scope>
    <scope>CLEAVAGE OF INITIATOR METHIONINE [LARGE SCALE ANALYSIS]</scope>
    <scope>IDENTIFICATION BY MASS SPECTROMETRY [LARGE SCALE ANALYSIS]</scope>
</reference>
<reference key="16">
    <citation type="journal article" date="2013" name="J. Proteome Res.">
        <title>Toward a comprehensive characterization of a human cancer cell phosphoproteome.</title>
        <authorList>
            <person name="Zhou H."/>
            <person name="Di Palma S."/>
            <person name="Preisinger C."/>
            <person name="Peng M."/>
            <person name="Polat A.N."/>
            <person name="Heck A.J."/>
            <person name="Mohammed S."/>
        </authorList>
    </citation>
    <scope>PHOSPHORYLATION [LARGE SCALE ANALYSIS] AT SER-224; SER-318; THR-319; SER-568; SER-574; SER-582 AND THR-602</scope>
    <scope>IDENTIFICATION BY MASS SPECTROMETRY [LARGE SCALE ANALYSIS]</scope>
    <source>
        <tissue>Cervix carcinoma</tissue>
        <tissue>Erythroleukemia</tissue>
    </source>
</reference>
<reference key="17">
    <citation type="journal article" date="2014" name="J. Proteomics">
        <title>An enzyme assisted RP-RPLC approach for in-depth analysis of human liver phosphoproteome.</title>
        <authorList>
            <person name="Bian Y."/>
            <person name="Song C."/>
            <person name="Cheng K."/>
            <person name="Dong M."/>
            <person name="Wang F."/>
            <person name="Huang J."/>
            <person name="Sun D."/>
            <person name="Wang L."/>
            <person name="Ye M."/>
            <person name="Zou H."/>
        </authorList>
    </citation>
    <scope>PHOSPHORYLATION [LARGE SCALE ANALYSIS] AT SER-582</scope>
    <scope>IDENTIFICATION BY MASS SPECTROMETRY [LARGE SCALE ANALYSIS]</scope>
    <source>
        <tissue>Liver</tissue>
    </source>
</reference>
<reference key="18">
    <citation type="journal article" date="2014" name="Science">
        <title>Exome sequencing links corticospinal motor neuron disease to common neurodegenerative disorders.</title>
        <authorList>
            <person name="Novarino G."/>
            <person name="Fenstermaker A.G."/>
            <person name="Zaki M.S."/>
            <person name="Hofree M."/>
            <person name="Silhavy J.L."/>
            <person name="Heiberg A.D."/>
            <person name="Abdellateef M."/>
            <person name="Rosti B."/>
            <person name="Scott E."/>
            <person name="Mansour L."/>
            <person name="Masri A."/>
            <person name="Kayserili H."/>
            <person name="Al-Aama J.Y."/>
            <person name="Abdel-Salam G.M."/>
            <person name="Karminejad A."/>
            <person name="Kara M."/>
            <person name="Kara B."/>
            <person name="Bozorgmehri B."/>
            <person name="Ben-Omran T."/>
            <person name="Mojahedi F."/>
            <person name="Mahmoud I.G."/>
            <person name="Bouslam N."/>
            <person name="Bouhouche A."/>
            <person name="Benomar A."/>
            <person name="Hanein S."/>
            <person name="Raymond L."/>
            <person name="Forlani S."/>
            <person name="Mascaro M."/>
            <person name="Selim L."/>
            <person name="Shehata N."/>
            <person name="Al-Allawi N."/>
            <person name="Bindu P.S."/>
            <person name="Azam M."/>
            <person name="Gunel M."/>
            <person name="Caglayan A."/>
            <person name="Bilguvar K."/>
            <person name="Tolun A."/>
            <person name="Issa M.Y."/>
            <person name="Schroth J."/>
            <person name="Spencer E.G."/>
            <person name="Rosti R.O."/>
            <person name="Akizu N."/>
            <person name="Vaux K.K."/>
            <person name="Johansen A."/>
            <person name="Koh A.A."/>
            <person name="Megahed H."/>
            <person name="Durr A."/>
            <person name="Brice A."/>
            <person name="Stevanin G."/>
            <person name="Gabriel S.B."/>
            <person name="Ideker T."/>
            <person name="Gleeson J.G."/>
        </authorList>
    </citation>
    <scope>INTERACTION WITH KIF1C</scope>
</reference>
<reference key="19">
    <citation type="journal article" date="2015" name="Biochim. Biophys. Acta">
        <title>Reconstitution of the targeting of Rab6A to the Golgi apparatus in semi-intact HeLa cells: A role of BICD2 in stabilizing Rab6A on Golgi membranes and a concerted role of Rab6A/BICD2 interactions in Golgi-to-ER retrograde transport.</title>
        <authorList>
            <person name="Matsuto M."/>
            <person name="Kano F."/>
            <person name="Murata M."/>
        </authorList>
    </citation>
    <scope>FUNCTION</scope>
</reference>
<reference key="20">
    <citation type="journal article" date="2015" name="Hum. Mutat.">
        <title>Novel mutations in the DYNC1H1 tail domain refine the genetic and clinical spectrum of dyneinopathies.</title>
        <authorList>
            <person name="Peeters K."/>
            <person name="Bervoets S."/>
            <person name="Chamova T."/>
            <person name="Litvinenko I."/>
            <person name="De Vriendt E."/>
            <person name="Bichev S."/>
            <person name="Kancheva D."/>
            <person name="Mitev V."/>
            <person name="Kennerson M."/>
            <person name="Timmerman V."/>
            <person name="De Jonghe P."/>
            <person name="Tournev I."/>
            <person name="MacMillan J."/>
            <person name="Jordanova A."/>
        </authorList>
    </citation>
    <scope>INTERACTION WITH DYNC1H1</scope>
</reference>
<reference key="21">
    <citation type="journal article" date="2015" name="Science">
        <title>The structure of the dynactin complex and its interaction with dynein.</title>
        <authorList>
            <person name="Urnavicius L."/>
            <person name="Zhang K."/>
            <person name="Diamant A.G."/>
            <person name="Motz C."/>
            <person name="Schlager M.A."/>
            <person name="Yu M."/>
            <person name="Patel N.A."/>
            <person name="Robinson C.V."/>
            <person name="Carter A.P."/>
        </authorList>
    </citation>
    <scope>FUNCTION</scope>
    <scope>SUBUNIT</scope>
</reference>
<reference key="22">
    <citation type="journal article" date="2013" name="Am. J. Hum. Genet.">
        <title>Molecular defects in the motor adaptor BICD2 cause proximal spinal muscular atrophy with autosomal-dominant inheritance.</title>
        <authorList>
            <person name="Peeters K."/>
            <person name="Litvinenko I."/>
            <person name="Asselbergh B."/>
            <person name="Almeida-Souza L."/>
            <person name="Chamova T."/>
            <person name="Geuens T."/>
            <person name="Ydens E."/>
            <person name="Zimon M."/>
            <person name="Irobi J."/>
            <person name="De Vriendt E."/>
            <person name="De Winter V."/>
            <person name="Ooms T."/>
            <person name="Timmerman V."/>
            <person name="Tournev I."/>
            <person name="Jordanova A."/>
        </authorList>
    </citation>
    <scope>VARIANTS SMALED2A LEU-107 AND GLY-774</scope>
    <scope>CHARACTERIZATION OF VARIANTS SMALED2A LEU-107 AND GLY-774</scope>
    <scope>INTERACTION WITH DNAI1 AND RAB6A</scope>
    <scope>SUBCELLULAR LOCATION</scope>
</reference>
<reference key="23">
    <citation type="journal article" date="2013" name="Am. J. Hum. Genet.">
        <title>Mutations in BICD2 cause dominant congenital spinal muscular atrophy and hereditary spastic paraplegia.</title>
        <authorList>
            <consortium name="UK10K"/>
            <person name="Oates E.C."/>
            <person name="Rossor A.M."/>
            <person name="Hafezparast M."/>
            <person name="Gonzalez M."/>
            <person name="Speziani F."/>
            <person name="Macarthur D.G."/>
            <person name="Lek M."/>
            <person name="Cottenie E."/>
            <person name="Scoto M."/>
            <person name="Foley A.R."/>
            <person name="Hurles M."/>
            <person name="Houlden H."/>
            <person name="Greensmith L."/>
            <person name="Auer-Grumbach M."/>
            <person name="Pieber T.R."/>
            <person name="Strom T.M."/>
            <person name="Schule R."/>
            <person name="Herrmann D.N."/>
            <person name="Sowden J.E."/>
            <person name="Acsadi G."/>
            <person name="Menezes M.P."/>
            <person name="Clarke N.F."/>
            <person name="Zuechner S."/>
            <person name="Muntoni F."/>
            <person name="North K.N."/>
            <person name="Reilly M.M."/>
        </authorList>
    </citation>
    <scope>VARIANTS SMALED2A LEU-107; PHE-189; PRO-501 AND THR-508</scope>
    <scope>CHARACTERIZATION OF VARIANTS SMALED2A LEU-107 AND PRO-501</scope>
    <scope>INTERACTION WITH DNAI1</scope>
    <scope>SUBCELLULAR LOCATION</scope>
</reference>
<reference key="24">
    <citation type="journal article" date="2013" name="Am. J. Hum. Genet.">
        <title>Mutations in BICD2, which encodes a golgin and important motor adaptor, cause congenital autosomal-dominant spinal muscular atrophy.</title>
        <authorList>
            <person name="Neveling K."/>
            <person name="Martinez-Carrera L.A."/>
            <person name="Hoelker I."/>
            <person name="Heister A."/>
            <person name="Verrips A."/>
            <person name="Hosseini-Barkooie S.M."/>
            <person name="Gilissen C."/>
            <person name="Vermeer S."/>
            <person name="Pennings M."/>
            <person name="Meijer R."/>
            <person name="Te Riele M."/>
            <person name="Frijns C.J."/>
            <person name="Suchowersky O."/>
            <person name="Maclaren L."/>
            <person name="Rudnik-Schoeneborn S."/>
            <person name="Sinke R.J."/>
            <person name="Zerres K."/>
            <person name="Lowry R.B."/>
            <person name="Lemmink H.H."/>
            <person name="Garbes L."/>
            <person name="Veltman J.A."/>
            <person name="Schelhaas H.J."/>
            <person name="Scheffer H."/>
            <person name="Wirth B."/>
        </authorList>
    </citation>
    <scope>VARIANTS SMALED2A LEU-107; THR-188 AND MET-703</scope>
    <scope>CHARACTERIZATION OF VARIANTS SMALED2A LEU-107; THR-188 AND MET-703</scope>
    <scope>VARIANT ARG-90</scope>
    <scope>SUBCELLULAR LOCATION</scope>
</reference>
<reference key="25">
    <citation type="journal article" date="2016" name="Neuromuscul. Disord.">
        <title>Recurrent de novo BICD2 mutation associated with arthrogryposis multiplex congenita and bilateral perisylvian polymicrogyria.</title>
        <authorList>
            <person name="Ravenscroft G."/>
            <person name="Di Donato N."/>
            <person name="Hahn G."/>
            <person name="Davis M.R."/>
            <person name="Craven P.D."/>
            <person name="Poke G."/>
            <person name="Neas K.R."/>
            <person name="Neuhann T.M."/>
            <person name="Dobyns W.B."/>
            <person name="Laing N.G."/>
        </authorList>
    </citation>
    <scope>VARIANT SMALED2B CYS-694</scope>
    <scope>INVOLVEMENT IN SMALED2B</scope>
</reference>
<reference key="26">
    <citation type="journal article" date="2017" name="Eur. J. Hum. Genet.">
        <title>Phenotypic extremes of BICD2-opathies: from lethal, congenital muscular atrophy with arthrogryposis to asymptomatic with subclinical features.</title>
        <authorList>
            <person name="Storbeck M."/>
            <person name="Horsberg Eriksen B."/>
            <person name="Unger A."/>
            <person name="Hoelker I."/>
            <person name="Aukrust I."/>
            <person name="Martinez-Carrera L.A."/>
            <person name="Linke W.A."/>
            <person name="Ferbert A."/>
            <person name="Heller R."/>
            <person name="Vorgerd M."/>
            <person name="Houge G."/>
            <person name="Wirth B."/>
        </authorList>
    </citation>
    <scope>VARIANTS SMALED2B ARG-194; TRP-542 AND CYS-694</scope>
    <scope>VARIANT SMALED2A MET-703</scope>
    <scope>INVOLVEMENT IN SMALED2B</scope>
</reference>
<reference key="27">
    <citation type="journal article" date="2018" name="Cold Spring Harb. Mol. Case Stud.">
        <title>In-frame de novo mutation in BICD2 in two patients with muscular atrophy and arthrogryposis.</title>
        <authorList>
            <person name="Koboldt D.C."/>
            <person name="Kastury R.D."/>
            <person name="Waldrop M.A."/>
            <person name="Kelly B.J."/>
            <person name="Mosher T.M."/>
            <person name="McLaughlin H."/>
            <person name="Corsmeier D."/>
            <person name="Slaughter J.L."/>
            <person name="Flanigan K.M."/>
            <person name="McBride K.L."/>
            <person name="Mehta L."/>
            <person name="Wilson R.K."/>
            <person name="White P."/>
        </authorList>
    </citation>
    <scope>VARIANT SMALED2B ASN-546 DEL</scope>
</reference>
<feature type="initiator methionine" description="Removed" evidence="23 26">
    <location>
        <position position="1"/>
    </location>
</feature>
<feature type="chain" id="PRO_0000205359" description="Protein bicaudal D homolog 2">
    <location>
        <begin position="2"/>
        <end position="824"/>
    </location>
</feature>
<feature type="region of interest" description="Interacts with DYNLL1, DYNC1H1, DYNC1I2, DCTN1 and DCTN2" evidence="1">
    <location>
        <begin position="25"/>
        <end position="398"/>
    </location>
</feature>
<feature type="region of interest" description="Disordered" evidence="3">
    <location>
        <begin position="311"/>
        <end position="330"/>
    </location>
</feature>
<feature type="region of interest" description="Interaction with KIF5A" evidence="1">
    <location>
        <begin position="334"/>
        <end position="599"/>
    </location>
</feature>
<feature type="region of interest" description="Disordered" evidence="3">
    <location>
        <begin position="398"/>
        <end position="425"/>
    </location>
</feature>
<feature type="region of interest" description="Disordered" evidence="3">
    <location>
        <begin position="559"/>
        <end position="622"/>
    </location>
</feature>
<feature type="region of interest" description="Interaction with RANBP2" evidence="1">
    <location>
        <begin position="590"/>
        <end position="824"/>
    </location>
</feature>
<feature type="region of interest" description="Interacts with RAB6A" evidence="1">
    <location>
        <begin position="666"/>
        <end position="814"/>
    </location>
</feature>
<feature type="region of interest" description="Disordered" evidence="3">
    <location>
        <begin position="804"/>
        <end position="824"/>
    </location>
</feature>
<feature type="coiled-coil region" evidence="2">
    <location>
        <begin position="20"/>
        <end position="269"/>
    </location>
</feature>
<feature type="coiled-coil region" evidence="2">
    <location>
        <begin position="338"/>
        <end position="537"/>
    </location>
</feature>
<feature type="coiled-coil region" evidence="2">
    <location>
        <begin position="666"/>
        <end position="808"/>
    </location>
</feature>
<feature type="compositionally biased region" description="Basic and acidic residues" evidence="3">
    <location>
        <begin position="402"/>
        <end position="422"/>
    </location>
</feature>
<feature type="compositionally biased region" description="Low complexity" evidence="3">
    <location>
        <begin position="604"/>
        <end position="618"/>
    </location>
</feature>
<feature type="modified residue" description="N-acetylserine" evidence="23 26">
    <location>
        <position position="2"/>
    </location>
</feature>
<feature type="modified residue" description="Phosphoserine" evidence="21 22">
    <location>
        <position position="190"/>
    </location>
</feature>
<feature type="modified residue" description="Phosphoserine" evidence="22 27">
    <location>
        <position position="224"/>
    </location>
</feature>
<feature type="modified residue" description="Phosphoserine" evidence="27">
    <location>
        <position position="318"/>
    </location>
</feature>
<feature type="modified residue" description="Phosphothreonine" evidence="27">
    <location>
        <position position="319"/>
    </location>
</feature>
<feature type="modified residue" description="Phosphoserine" evidence="22">
    <location>
        <position position="343"/>
    </location>
</feature>
<feature type="modified residue" description="Phosphoserine" evidence="22">
    <location>
        <position position="395"/>
    </location>
</feature>
<feature type="modified residue" description="Phosphoserine" evidence="27">
    <location>
        <position position="568"/>
    </location>
</feature>
<feature type="modified residue" description="Phosphoserine" evidence="27">
    <location>
        <position position="574"/>
    </location>
</feature>
<feature type="modified residue" description="Phosphoserine" evidence="19 20 22 24 25 27 28">
    <location>
        <position position="582"/>
    </location>
</feature>
<feature type="modified residue" description="Phosphothreonine" evidence="27">
    <location>
        <position position="602"/>
    </location>
</feature>
<feature type="modified residue" description="Phosphothreonine" evidence="21">
    <location>
        <position position="821"/>
    </location>
</feature>
<feature type="modified residue" description="Phosphoserine" evidence="21">
    <location>
        <position position="823"/>
    </location>
</feature>
<feature type="splice variant" id="VSP_007969" description="In isoform 2." evidence="16">
    <original>L</original>
    <variation>VSHTCACASDRAEGTGLANQVFCSEKHSIYCD</variation>
    <location>
        <position position="824"/>
    </location>
</feature>
<feature type="sequence variant" id="VAR_070111" description="In dbSNP:rs61754130." evidence="6">
    <original>K</original>
    <variation>R</variation>
    <location>
        <position position="90"/>
    </location>
</feature>
<feature type="sequence variant" id="VAR_070112" description="In SMALED2A; causes Golgi fragmentation; affects interaction with RAB6A and DNAI1 and the subcellular location of the protein; dbSNP:rs398123028." evidence="6 7 8">
    <original>S</original>
    <variation>L</variation>
    <location>
        <position position="107"/>
    </location>
</feature>
<feature type="sequence variant" id="VAR_070113" description="In SMALED2A; causes Golgi fragmentation; dbSNP:rs398123029." evidence="6">
    <original>N</original>
    <variation>T</variation>
    <location>
        <position position="188"/>
    </location>
</feature>
<feature type="sequence variant" id="VAR_070114" description="In SMALED2A; dbSNP:rs1587671674." evidence="8">
    <original>I</original>
    <variation>F</variation>
    <location>
        <position position="189"/>
    </location>
</feature>
<feature type="sequence variant" id="VAR_081854" description="In SMALED2B; dbSNP:rs1564061982." evidence="14">
    <original>Q</original>
    <variation>R</variation>
    <location>
        <position position="194"/>
    </location>
</feature>
<feature type="sequence variant" id="VAR_070115" description="In SMALED2A; the mutation causes increased interaction with dynein; the mutant protein accumulates abnormally in the perinuclear region where it forms ring-like structures that colocalize with RAB6A; dbSNP:rs398123032." evidence="8">
    <original>R</original>
    <variation>P</variation>
    <location>
        <position position="501"/>
    </location>
</feature>
<feature type="sequence variant" id="VAR_070116" description="In SMALED2A; dbSNP:rs398123031." evidence="8">
    <original>K</original>
    <variation>T</variation>
    <location>
        <position position="508"/>
    </location>
</feature>
<feature type="sequence variant" id="VAR_081855" description="In SMALED2B." evidence="14">
    <original>C</original>
    <variation>W</variation>
    <location>
        <position position="542"/>
    </location>
</feature>
<feature type="sequence variant" id="VAR_081856" description="In SMALED2B; dbSNP:rs1064795760." evidence="15">
    <location>
        <position position="546"/>
    </location>
</feature>
<feature type="sequence variant" id="VAR_081857" description="In SMALED2B; dbSNP:rs797045412." evidence="13 14">
    <original>R</original>
    <variation>C</variation>
    <location>
        <position position="694"/>
    </location>
</feature>
<feature type="sequence variant" id="VAR_070117" description="In SMALED2A; causes Golgi fragmentation; dbSNP:rs371707778." evidence="6 14">
    <original>T</original>
    <variation>M</variation>
    <location>
        <position position="703"/>
    </location>
</feature>
<feature type="sequence variant" id="VAR_070118" description="In SMALED2A; affects interaction with RAB6A and DNAI1 and the subcellular location of the protein; dbSNP:rs398123030." evidence="7">
    <original>E</original>
    <variation>G</variation>
    <location>
        <position position="774"/>
    </location>
</feature>
<feature type="helix" evidence="30">
    <location>
        <begin position="6"/>
        <end position="16"/>
    </location>
</feature>
<feature type="helix" evidence="30">
    <location>
        <begin position="19"/>
        <end position="78"/>
    </location>
</feature>
<feature type="helix" evidence="29">
    <location>
        <begin position="715"/>
        <end position="740"/>
    </location>
</feature>
<feature type="helix" evidence="29">
    <location>
        <begin position="743"/>
        <end position="799"/>
    </location>
</feature>
<comment type="function">
    <text evidence="1 11 12">Acts as an adapter protein linking the dynein motor complex to various cargos and converts dynein from a non-processive to a highly processive motor in the presence of dynactin. Facilitates and stabilizes the interaction between dynein and dynactin and activates dynein processivity (the ability to move along a microtubule for a long distance without falling off the track) (PubMed:25814576). Facilitates the binding of RAB6A to the Golgi by stabilizing its GTP-bound form. Regulates coat complex coatomer protein I (COPI)-independent Golgi-endoplasmic reticulum transport via its interaction with RAB6A and recruitment of the dynein-dynactin motor complex (PubMed:25962623). Contributes to nuclear and centrosomal positioning prior to mitotic entry through regulation of both dynein and kinesin-1. During G2 phase of the cell cycle, associates with RANBP2 at the nuclear pores and recruits dynein and dynactin to the nuclear envelope to ensure proper positioning of the nucleus relative to centrosomes prior to the onset of mitosis (By similarity).</text>
</comment>
<comment type="subunit">
    <text evidence="1 4 5 7 8 9 10 11">Part of a tripartite complex with dynein and dynactin, acts an adapter linking the dynein motor complex and dynactin (PubMed:25814576). Interacts with CPNE4 (via VWFA domain) (By similarity). Interacts with RAB6A (PubMed:23664119). Interacts with NEK9 (PubMed:11864968). Interacts with DNAI1 (PubMed:23664119, PubMed:23664120). Interacts with DYNC1H1 (PubMed:25512093). Interacts with RANBP2 (PubMed:20386726). Binds preferentially to tyrosinated microtubules than to detyrosinated microtubules. Interacts with DYNLL1, DYNC1I2; DCTN1, DCTN2 and KIF5A (By similarity). Interacts with KIF1C (PubMed:24482476).</text>
</comment>
<comment type="interaction">
    <interactant intactId="EBI-2372628">
        <id>Q8TD16</id>
    </interactant>
    <interactant intactId="EBI-366267">
        <id>O14576</id>
        <label>DYNC1I1</label>
    </interactant>
    <organismsDiffer>false</organismsDiffer>
    <experiments>2</experiments>
</comment>
<comment type="interaction">
    <interactant intactId="EBI-2372628">
        <id>Q8TD16</id>
    </interactant>
    <interactant intactId="EBI-1052826">
        <id>P20340</id>
        <label>RAB6A</label>
    </interactant>
    <organismsDiffer>false</organismsDiffer>
    <experiments>3</experiments>
</comment>
<comment type="interaction">
    <interactant intactId="EBI-2372628">
        <id>Q8TD16</id>
    </interactant>
    <interactant intactId="EBI-973138">
        <id>P49792</id>
        <label>RANBP2</label>
    </interactant>
    <organismsDiffer>false</organismsDiffer>
    <experiments>2</experiments>
</comment>
<comment type="interaction">
    <interactant intactId="EBI-11975051">
        <id>Q8TD16-2</id>
    </interactant>
    <interactant intactId="EBI-2825900">
        <id>Q92619</id>
        <label>ARHGAP45</label>
    </interactant>
    <organismsDiffer>false</organismsDiffer>
    <experiments>3</experiments>
</comment>
<comment type="interaction">
    <interactant intactId="EBI-11975051">
        <id>Q8TD16-2</id>
    </interactant>
    <interactant intactId="EBI-714504">
        <id>O75828</id>
        <label>CBR3</label>
    </interactant>
    <organismsDiffer>false</organismsDiffer>
    <experiments>3</experiments>
</comment>
<comment type="interaction">
    <interactant intactId="EBI-11975051">
        <id>Q8TD16-2</id>
    </interactant>
    <interactant intactId="EBI-10175300">
        <id>Q8TD31-3</id>
        <label>CCHCR1</label>
    </interactant>
    <organismsDiffer>false</organismsDiffer>
    <experiments>3</experiments>
</comment>
<comment type="interaction">
    <interactant intactId="EBI-11975051">
        <id>Q8TD16-2</id>
    </interactant>
    <interactant intactId="EBI-14148644">
        <id>O43602-2</id>
        <label>DCX</label>
    </interactant>
    <organismsDiffer>false</organismsDiffer>
    <experiments>3</experiments>
</comment>
<comment type="interaction">
    <interactant intactId="EBI-11975051">
        <id>Q8TD16-2</id>
    </interactant>
    <interactant intactId="EBI-1752811">
        <id>Q9BQ89</id>
        <label>FAM110A</label>
    </interactant>
    <organismsDiffer>false</organismsDiffer>
    <experiments>3</experiments>
</comment>
<comment type="interaction">
    <interactant intactId="EBI-11975051">
        <id>Q8TD16-2</id>
    </interactant>
    <interactant intactId="EBI-719941">
        <id>Q3B820</id>
        <label>FAM161A</label>
    </interactant>
    <organismsDiffer>false</organismsDiffer>
    <experiments>3</experiments>
</comment>
<comment type="interaction">
    <interactant intactId="EBI-11975051">
        <id>Q8TD16-2</id>
    </interactant>
    <interactant intactId="EBI-7225287">
        <id>Q96MY7</id>
        <label>FAM161B</label>
    </interactant>
    <organismsDiffer>false</organismsDiffer>
    <experiments>3</experiments>
</comment>
<comment type="interaction">
    <interactant intactId="EBI-11975051">
        <id>Q8TD16-2</id>
    </interactant>
    <interactant intactId="EBI-742802">
        <id>Q9Y247</id>
        <label>FAM50B</label>
    </interactant>
    <organismsDiffer>false</organismsDiffer>
    <experiments>3</experiments>
</comment>
<comment type="interaction">
    <interactant intactId="EBI-11975051">
        <id>Q8TD16-2</id>
    </interactant>
    <interactant intactId="EBI-11953488">
        <id>P56524-2</id>
        <label>HDAC4</label>
    </interactant>
    <organismsDiffer>false</organismsDiffer>
    <experiments>3</experiments>
</comment>
<comment type="interaction">
    <interactant intactId="EBI-11975051">
        <id>Q8TD16-2</id>
    </interactant>
    <interactant intactId="EBI-739832">
        <id>Q8TBB1</id>
        <label>LNX1</label>
    </interactant>
    <organismsDiffer>false</organismsDiffer>
    <experiments>3</experiments>
</comment>
<comment type="interaction">
    <interactant intactId="EBI-11975051">
        <id>Q8TD16-2</id>
    </interactant>
    <interactant intactId="EBI-1048159">
        <id>P55081</id>
        <label>MFAP1</label>
    </interactant>
    <organismsDiffer>false</organismsDiffer>
    <experiments>3</experiments>
</comment>
<comment type="interaction">
    <interactant intactId="EBI-11975051">
        <id>Q8TD16-2</id>
    </interactant>
    <interactant intactId="EBI-14086479">
        <id>Q8IVT4</id>
        <label>MGC50722</label>
    </interactant>
    <organismsDiffer>false</organismsDiffer>
    <experiments>3</experiments>
</comment>
<comment type="interaction">
    <interactant intactId="EBI-11975051">
        <id>Q8TD16-2</id>
    </interactant>
    <interactant intactId="EBI-1757866">
        <id>P00540</id>
        <label>MOS</label>
    </interactant>
    <organismsDiffer>false</organismsDiffer>
    <experiments>3</experiments>
</comment>
<comment type="interaction">
    <interactant intactId="EBI-11975051">
        <id>Q8TD16-2</id>
    </interactant>
    <interactant intactId="EBI-713832">
        <id>Q6P1K2</id>
        <label>PMF1</label>
    </interactant>
    <organismsDiffer>false</organismsDiffer>
    <experiments>4</experiments>
</comment>
<comment type="interaction">
    <interactant intactId="EBI-11975051">
        <id>Q8TD16-2</id>
    </interactant>
    <interactant intactId="EBI-10276663">
        <id>Q8WUT1</id>
        <label>POLDIP3</label>
    </interactant>
    <organismsDiffer>false</organismsDiffer>
    <experiments>3</experiments>
</comment>
<comment type="interaction">
    <interactant intactId="EBI-11975051">
        <id>Q8TD16-2</id>
    </interactant>
    <interactant intactId="EBI-2557469">
        <id>Q6NYC8</id>
        <label>PPP1R18</label>
    </interactant>
    <organismsDiffer>false</organismsDiffer>
    <experiments>3</experiments>
</comment>
<comment type="interaction">
    <interactant intactId="EBI-11975051">
        <id>Q8TD16-2</id>
    </interactant>
    <interactant intactId="EBI-2798416">
        <id>Q99633</id>
        <label>PRPF18</label>
    </interactant>
    <organismsDiffer>false</organismsDiffer>
    <experiments>3</experiments>
</comment>
<comment type="interaction">
    <interactant intactId="EBI-11975051">
        <id>Q8TD16-2</id>
    </interactant>
    <interactant intactId="EBI-1567797">
        <id>Q8WWY3</id>
        <label>PRPF31</label>
    </interactant>
    <organismsDiffer>false</organismsDiffer>
    <experiments>3</experiments>
</comment>
<comment type="interaction">
    <interactant intactId="EBI-11975051">
        <id>Q8TD16-2</id>
    </interactant>
    <interactant intactId="EBI-1760079">
        <id>Q9NRW1</id>
        <label>RAB6B</label>
    </interactant>
    <organismsDiffer>false</organismsDiffer>
    <experiments>3</experiments>
</comment>
<comment type="interaction">
    <interactant intactId="EBI-11975051">
        <id>Q8TD16-2</id>
    </interactant>
    <interactant intactId="EBI-740773">
        <id>Q96IZ5</id>
        <label>RBM41</label>
    </interactant>
    <organismsDiffer>false</organismsDiffer>
    <experiments>3</experiments>
</comment>
<comment type="interaction">
    <interactant intactId="EBI-11975051">
        <id>Q8TD16-2</id>
    </interactant>
    <interactant intactId="EBI-632715">
        <id>Q13573</id>
        <label>SNW1</label>
    </interactant>
    <organismsDiffer>false</organismsDiffer>
    <experiments>3</experiments>
</comment>
<comment type="interaction">
    <interactant intactId="EBI-11975051">
        <id>Q8TD16-2</id>
    </interactant>
    <interactant intactId="EBI-702328">
        <id>Q969Z0</id>
        <label>TBRG4</label>
    </interactant>
    <organismsDiffer>false</organismsDiffer>
    <experiments>3</experiments>
</comment>
<comment type="interaction">
    <interactant intactId="EBI-11975051">
        <id>Q8TD16-2</id>
    </interactant>
    <interactant intactId="EBI-710310">
        <id>Q15560</id>
        <label>TCEA2</label>
    </interactant>
    <organismsDiffer>false</organismsDiffer>
    <experiments>3</experiments>
</comment>
<comment type="interaction">
    <interactant intactId="EBI-11975051">
        <id>Q8TD16-2</id>
    </interactant>
    <interactant intactId="EBI-11955057">
        <id>Q8N8B7-2</id>
        <label>TCEANC</label>
    </interactant>
    <organismsDiffer>false</organismsDiffer>
    <experiments>3</experiments>
</comment>
<comment type="interaction">
    <interactant intactId="EBI-11975051">
        <id>Q8TD16-2</id>
    </interactant>
    <interactant intactId="EBI-10241197">
        <id>Q3SY00</id>
        <label>TSGA10IP</label>
    </interactant>
    <organismsDiffer>false</organismsDiffer>
    <experiments>3</experiments>
</comment>
<comment type="interaction">
    <interactant intactId="EBI-11975051">
        <id>Q8TD16-2</id>
    </interactant>
    <interactant intactId="EBI-743272">
        <id>O75604</id>
        <label>USP2</label>
    </interactant>
    <organismsDiffer>false</organismsDiffer>
    <experiments>3</experiments>
</comment>
<comment type="interaction">
    <interactant intactId="EBI-11975051">
        <id>Q8TD16-2</id>
    </interactant>
    <interactant intactId="EBI-11737646">
        <id>Q5TAP6</id>
        <label>UTP14C</label>
    </interactant>
    <organismsDiffer>false</organismsDiffer>
    <experiments>3</experiments>
</comment>
<comment type="interaction">
    <interactant intactId="EBI-11975051">
        <id>Q8TD16-2</id>
    </interactant>
    <interactant intactId="EBI-515331">
        <id>P07947</id>
        <label>YES1</label>
    </interactant>
    <organismsDiffer>false</organismsDiffer>
    <experiments>3</experiments>
</comment>
<comment type="interaction">
    <interactant intactId="EBI-11975051">
        <id>Q8TD16-2</id>
    </interactant>
    <interactant intactId="EBI-14104088">
        <id>Q53FD0-2</id>
        <label>ZC2HC1C</label>
    </interactant>
    <organismsDiffer>false</organismsDiffer>
    <experiments>3</experiments>
</comment>
<comment type="interaction">
    <interactant intactId="EBI-11975051">
        <id>Q8TD16-2</id>
    </interactant>
    <interactant intactId="EBI-2682299">
        <id>Q96NC0</id>
        <label>ZMAT2</label>
    </interactant>
    <organismsDiffer>false</organismsDiffer>
    <experiments>3</experiments>
</comment>
<comment type="interaction">
    <interactant intactId="EBI-11975051">
        <id>Q8TD16-2</id>
    </interactant>
    <interactant intactId="EBI-740727">
        <id>Q8TAU3</id>
        <label>ZNF417</label>
    </interactant>
    <organismsDiffer>false</organismsDiffer>
    <experiments>3</experiments>
</comment>
<comment type="interaction">
    <interactant intactId="EBI-11975051">
        <id>Q8TD16-2</id>
    </interactant>
    <interactant intactId="EBI-9116427">
        <id>Q9P2J8</id>
        <label>ZNF624</label>
    </interactant>
    <organismsDiffer>false</organismsDiffer>
    <experiments>3</experiments>
</comment>
<comment type="interaction">
    <interactant intactId="EBI-11975051">
        <id>Q8TD16-2</id>
    </interactant>
    <interactant intactId="EBI-11985915">
        <id>Q5T619</id>
        <label>ZNF648</label>
    </interactant>
    <organismsDiffer>false</organismsDiffer>
    <experiments>3</experiments>
</comment>
<comment type="interaction">
    <interactant intactId="EBI-11975051">
        <id>Q8TD16-2</id>
    </interactant>
    <interactant intactId="EBI-12006574">
        <id>Q96BR6</id>
        <label>ZNF669</label>
    </interactant>
    <organismsDiffer>false</organismsDiffer>
    <experiments>3</experiments>
</comment>
<comment type="interaction">
    <interactant intactId="EBI-11975051">
        <id>Q8TD16-2</id>
    </interactant>
    <interactant intactId="EBI-745276">
        <id>Q9BS34</id>
        <label>ZNF670</label>
    </interactant>
    <organismsDiffer>false</organismsDiffer>
    <experiments>3</experiments>
</comment>
<comment type="interaction">
    <interactant intactId="EBI-11975051">
        <id>Q8TD16-2</id>
    </interactant>
    <interactant intactId="EBI-1210440">
        <id>O43309</id>
        <label>ZSCAN12</label>
    </interactant>
    <organismsDiffer>false</organismsDiffer>
    <experiments>3</experiments>
</comment>
<comment type="interaction">
    <interactant intactId="EBI-11975051">
        <id>Q8TD16-2</id>
    </interactant>
    <interactant intactId="EBI-5667532">
        <id>Q3MJ62</id>
        <label>ZSCAN23</label>
    </interactant>
    <organismsDiffer>false</organismsDiffer>
    <experiments>3</experiments>
</comment>
<comment type="subcellular location">
    <subcellularLocation>
        <location evidence="6 7">Golgi apparatus</location>
    </subcellularLocation>
    <subcellularLocation>
        <location evidence="4">Cytoplasm</location>
        <location evidence="4">Cytoskeleton</location>
    </subcellularLocation>
    <subcellularLocation>
        <location evidence="6 8">Cytoplasm</location>
    </subcellularLocation>
    <subcellularLocation>
        <location evidence="5">Nucleus envelope</location>
    </subcellularLocation>
    <subcellularLocation>
        <location evidence="5">Nucleus</location>
        <location evidence="5">Nuclear pore complex</location>
    </subcellularLocation>
    <text evidence="1 4 5">In interphase cells mainly localizes to the Golgi complex and colocalizes with dynactin at microtubule plus ends (By similarity). Localizes to the nuclear envelope and cytoplasmic stacks of nuclear pore complex known as annulate lamellae in a RANBP2-dependent manner during G2 phase of the cell cycle (PubMed:20386726).</text>
</comment>
<comment type="alternative products">
    <event type="alternative splicing"/>
    <isoform>
        <id>Q8TD16-1</id>
        <name>1</name>
        <sequence type="displayed"/>
    </isoform>
    <isoform>
        <id>Q8TD16-2</id>
        <name>2</name>
        <sequence type="described" ref="VSP_007969"/>
    </isoform>
</comment>
<comment type="tissue specificity">
    <text>Ubiquitous.</text>
</comment>
<comment type="domain">
    <text evidence="1">The fourth coiled coil region is involved in Golgi targeting and in the interaction with DCTN2.</text>
</comment>
<comment type="PTM">
    <text evidence="4">Phosphorylated by NEK9 in vitro.</text>
</comment>
<comment type="disease" evidence="6 7 8 14">
    <disease id="DI-03814">
        <name>Spinal muscular atrophy, lower extremity-predominant 2A, childhood onset, autosomal dominant</name>
        <acronym>SMALED2A</acronym>
        <description>An autosomal dominant form of spinal muscular atrophy characterized by early-childhood onset of muscle weakness and atrophy predominantly affecting the proximal and distal muscles of the lower extremity, although some patients may show upper extremity involvement. The disorder results in delayed walking, waddling gait, difficulty walking, and loss of distal reflexes. Some patients may have foot deformities or hyperlordosis, and some show mild upper motor signs, such as spasticity. Sensation, bulbar function, and cognitive function are preserved. The disorder shows very slow progression throughout life.</description>
        <dbReference type="MIM" id="615290"/>
    </disease>
    <text>The disease is caused by variants affecting the gene represented in this entry.</text>
</comment>
<comment type="disease" evidence="13 14 15">
    <disease id="DI-05467">
        <name>Spinal muscular atrophy, lower extremity-predominant, 2B, prenatal onset, autosomal dominant</name>
        <acronym>SMALED2B</acronym>
        <description>An autosomal dominant neuromuscular disorder characterized by decreased fetal movements, fractures in utero, severe congenital joint contractures, arthrogryposis multiplex congenita, severe hypotonia, muscle atrophy, and respiratory insufficiency and failure due to muscle weakness. Some patients may have dysmorphic facial features and/or abnormalities on brain imaging. Death in early childhood may occur.</description>
        <dbReference type="MIM" id="618291"/>
    </disease>
    <text>The disease is caused by variants affecting the gene represented in this entry.</text>
</comment>
<comment type="miscellaneous">
    <molecule>Isoform 2</molecule>
    <text evidence="17">Due to intron retention.</text>
</comment>
<comment type="similarity">
    <text evidence="17">Belongs to the BicD family.</text>
</comment>
<comment type="sequence caution" evidence="17">
    <conflict type="erroneous initiation">
        <sequence resource="EMBL-CDS" id="BAA31674"/>
    </conflict>
    <text>Truncated N-terminus.</text>
</comment>
<name>BICD2_HUMAN</name>
<organism>
    <name type="scientific">Homo sapiens</name>
    <name type="common">Human</name>
    <dbReference type="NCBI Taxonomy" id="9606"/>
    <lineage>
        <taxon>Eukaryota</taxon>
        <taxon>Metazoa</taxon>
        <taxon>Chordata</taxon>
        <taxon>Craniata</taxon>
        <taxon>Vertebrata</taxon>
        <taxon>Euteleostomi</taxon>
        <taxon>Mammalia</taxon>
        <taxon>Eutheria</taxon>
        <taxon>Euarchontoglires</taxon>
        <taxon>Primates</taxon>
        <taxon>Haplorrhini</taxon>
        <taxon>Catarrhini</taxon>
        <taxon>Hominidae</taxon>
        <taxon>Homo</taxon>
    </lineage>
</organism>
<protein>
    <recommendedName>
        <fullName>Protein bicaudal D homolog 2</fullName>
        <shortName>Bic-D 2</shortName>
    </recommendedName>
</protein>
<keyword id="KW-0002">3D-structure</keyword>
<keyword id="KW-0007">Acetylation</keyword>
<keyword id="KW-0025">Alternative splicing</keyword>
<keyword id="KW-0175">Coiled coil</keyword>
<keyword id="KW-0963">Cytoplasm</keyword>
<keyword id="KW-0206">Cytoskeleton</keyword>
<keyword id="KW-0225">Disease variant</keyword>
<keyword id="KW-0333">Golgi apparatus</keyword>
<keyword id="KW-0509">mRNA transport</keyword>
<keyword id="KW-0523">Neurodegeneration</keyword>
<keyword id="KW-0906">Nuclear pore complex</keyword>
<keyword id="KW-0539">Nucleus</keyword>
<keyword id="KW-0597">Phosphoprotein</keyword>
<keyword id="KW-0653">Protein transport</keyword>
<keyword id="KW-1267">Proteomics identification</keyword>
<keyword id="KW-1185">Reference proteome</keyword>
<keyword id="KW-0811">Translocation</keyword>
<keyword id="KW-0813">Transport</keyword>